<accession>O31580</accession>
<name>YFHL_BACSU</name>
<organism>
    <name type="scientific">Bacillus subtilis (strain 168)</name>
    <dbReference type="NCBI Taxonomy" id="224308"/>
    <lineage>
        <taxon>Bacteria</taxon>
        <taxon>Bacillati</taxon>
        <taxon>Bacillota</taxon>
        <taxon>Bacilli</taxon>
        <taxon>Bacillales</taxon>
        <taxon>Bacillaceae</taxon>
        <taxon>Bacillus</taxon>
    </lineage>
</organism>
<dbReference type="EMBL" id="D85082">
    <property type="protein sequence ID" value="BAA24478.1"/>
    <property type="molecule type" value="Genomic_DNA"/>
</dbReference>
<dbReference type="EMBL" id="AL009126">
    <property type="protein sequence ID" value="CAB12686.1"/>
    <property type="molecule type" value="Genomic_DNA"/>
</dbReference>
<dbReference type="PIR" id="E69801">
    <property type="entry name" value="E69801"/>
</dbReference>
<dbReference type="SMR" id="O31580"/>
<dbReference type="FunCoup" id="O31580">
    <property type="interactions" value="8"/>
</dbReference>
<dbReference type="STRING" id="224308.BSU08580"/>
<dbReference type="TCDB" id="9.A.32.2.1">
    <property type="family name" value="the sdpc (peptide-antibiotic killer factor) immunity protein, sdpi (sdpi) family"/>
</dbReference>
<dbReference type="PaxDb" id="224308-BSU08580"/>
<dbReference type="EnsemblBacteria" id="CAB12686">
    <property type="protein sequence ID" value="CAB12686"/>
    <property type="gene ID" value="BSU_08580"/>
</dbReference>
<dbReference type="GeneID" id="939228"/>
<dbReference type="KEGG" id="bsu:BSU08580"/>
<dbReference type="PATRIC" id="fig|224308.179.peg.926"/>
<dbReference type="eggNOG" id="COG5658">
    <property type="taxonomic scope" value="Bacteria"/>
</dbReference>
<dbReference type="InParanoid" id="O31580"/>
<dbReference type="OrthoDB" id="3173919at2"/>
<dbReference type="BioCyc" id="BSUB:BSU08580-MONOMER"/>
<dbReference type="Proteomes" id="UP000001570">
    <property type="component" value="Chromosome"/>
</dbReference>
<dbReference type="GO" id="GO:0005886">
    <property type="term" value="C:plasma membrane"/>
    <property type="evidence" value="ECO:0007669"/>
    <property type="project" value="UniProtKB-SubCell"/>
</dbReference>
<dbReference type="InterPro" id="IPR025962">
    <property type="entry name" value="SdpI/YhfL"/>
</dbReference>
<dbReference type="Pfam" id="PF13630">
    <property type="entry name" value="SdpI"/>
    <property type="match status" value="1"/>
</dbReference>
<comment type="subcellular location">
    <subcellularLocation>
        <location evidence="2">Cell membrane</location>
        <topology evidence="2">Multi-pass membrane protein</topology>
    </subcellularLocation>
</comment>
<evidence type="ECO:0000255" key="1"/>
<evidence type="ECO:0000305" key="2"/>
<keyword id="KW-1003">Cell membrane</keyword>
<keyword id="KW-0472">Membrane</keyword>
<keyword id="KW-1185">Reference proteome</keyword>
<keyword id="KW-0812">Transmembrane</keyword>
<keyword id="KW-1133">Transmembrane helix</keyword>
<gene>
    <name type="primary">yfhL</name>
    <name type="ordered locus">BSU08580</name>
</gene>
<proteinExistence type="predicted"/>
<reference key="1">
    <citation type="journal article" date="1996" name="DNA Res.">
        <title>Cloning and sequencing of a 27.8-kb nucleotide sequence of the 79 degrees-81 degrees region of the Bacillus subtilis genome containing the sspE locus.</title>
        <authorList>
            <person name="Yamamoto H."/>
            <person name="Uchiyama S."/>
            <person name="Sekiguchi J."/>
        </authorList>
    </citation>
    <scope>NUCLEOTIDE SEQUENCE [GENOMIC DNA]</scope>
</reference>
<reference key="2">
    <citation type="journal article" date="1997" name="Nature">
        <title>The complete genome sequence of the Gram-positive bacterium Bacillus subtilis.</title>
        <authorList>
            <person name="Kunst F."/>
            <person name="Ogasawara N."/>
            <person name="Moszer I."/>
            <person name="Albertini A.M."/>
            <person name="Alloni G."/>
            <person name="Azevedo V."/>
            <person name="Bertero M.G."/>
            <person name="Bessieres P."/>
            <person name="Bolotin A."/>
            <person name="Borchert S."/>
            <person name="Borriss R."/>
            <person name="Boursier L."/>
            <person name="Brans A."/>
            <person name="Braun M."/>
            <person name="Brignell S.C."/>
            <person name="Bron S."/>
            <person name="Brouillet S."/>
            <person name="Bruschi C.V."/>
            <person name="Caldwell B."/>
            <person name="Capuano V."/>
            <person name="Carter N.M."/>
            <person name="Choi S.-K."/>
            <person name="Codani J.-J."/>
            <person name="Connerton I.F."/>
            <person name="Cummings N.J."/>
            <person name="Daniel R.A."/>
            <person name="Denizot F."/>
            <person name="Devine K.M."/>
            <person name="Duesterhoeft A."/>
            <person name="Ehrlich S.D."/>
            <person name="Emmerson P.T."/>
            <person name="Entian K.-D."/>
            <person name="Errington J."/>
            <person name="Fabret C."/>
            <person name="Ferrari E."/>
            <person name="Foulger D."/>
            <person name="Fritz C."/>
            <person name="Fujita M."/>
            <person name="Fujita Y."/>
            <person name="Fuma S."/>
            <person name="Galizzi A."/>
            <person name="Galleron N."/>
            <person name="Ghim S.-Y."/>
            <person name="Glaser P."/>
            <person name="Goffeau A."/>
            <person name="Golightly E.J."/>
            <person name="Grandi G."/>
            <person name="Guiseppi G."/>
            <person name="Guy B.J."/>
            <person name="Haga K."/>
            <person name="Haiech J."/>
            <person name="Harwood C.R."/>
            <person name="Henaut A."/>
            <person name="Hilbert H."/>
            <person name="Holsappel S."/>
            <person name="Hosono S."/>
            <person name="Hullo M.-F."/>
            <person name="Itaya M."/>
            <person name="Jones L.-M."/>
            <person name="Joris B."/>
            <person name="Karamata D."/>
            <person name="Kasahara Y."/>
            <person name="Klaerr-Blanchard M."/>
            <person name="Klein C."/>
            <person name="Kobayashi Y."/>
            <person name="Koetter P."/>
            <person name="Koningstein G."/>
            <person name="Krogh S."/>
            <person name="Kumano M."/>
            <person name="Kurita K."/>
            <person name="Lapidus A."/>
            <person name="Lardinois S."/>
            <person name="Lauber J."/>
            <person name="Lazarevic V."/>
            <person name="Lee S.-M."/>
            <person name="Levine A."/>
            <person name="Liu H."/>
            <person name="Masuda S."/>
            <person name="Mauel C."/>
            <person name="Medigue C."/>
            <person name="Medina N."/>
            <person name="Mellado R.P."/>
            <person name="Mizuno M."/>
            <person name="Moestl D."/>
            <person name="Nakai S."/>
            <person name="Noback M."/>
            <person name="Noone D."/>
            <person name="O'Reilly M."/>
            <person name="Ogawa K."/>
            <person name="Ogiwara A."/>
            <person name="Oudega B."/>
            <person name="Park S.-H."/>
            <person name="Parro V."/>
            <person name="Pohl T.M."/>
            <person name="Portetelle D."/>
            <person name="Porwollik S."/>
            <person name="Prescott A.M."/>
            <person name="Presecan E."/>
            <person name="Pujic P."/>
            <person name="Purnelle B."/>
            <person name="Rapoport G."/>
            <person name="Rey M."/>
            <person name="Reynolds S."/>
            <person name="Rieger M."/>
            <person name="Rivolta C."/>
            <person name="Rocha E."/>
            <person name="Roche B."/>
            <person name="Rose M."/>
            <person name="Sadaie Y."/>
            <person name="Sato T."/>
            <person name="Scanlan E."/>
            <person name="Schleich S."/>
            <person name="Schroeter R."/>
            <person name="Scoffone F."/>
            <person name="Sekiguchi J."/>
            <person name="Sekowska A."/>
            <person name="Seror S.J."/>
            <person name="Serror P."/>
            <person name="Shin B.-S."/>
            <person name="Soldo B."/>
            <person name="Sorokin A."/>
            <person name="Tacconi E."/>
            <person name="Takagi T."/>
            <person name="Takahashi H."/>
            <person name="Takemaru K."/>
            <person name="Takeuchi M."/>
            <person name="Tamakoshi A."/>
            <person name="Tanaka T."/>
            <person name="Terpstra P."/>
            <person name="Tognoni A."/>
            <person name="Tosato V."/>
            <person name="Uchiyama S."/>
            <person name="Vandenbol M."/>
            <person name="Vannier F."/>
            <person name="Vassarotti A."/>
            <person name="Viari A."/>
            <person name="Wambutt R."/>
            <person name="Wedler E."/>
            <person name="Wedler H."/>
            <person name="Weitzenegger T."/>
            <person name="Winters P."/>
            <person name="Wipat A."/>
            <person name="Yamamoto H."/>
            <person name="Yamane K."/>
            <person name="Yasumoto K."/>
            <person name="Yata K."/>
            <person name="Yoshida K."/>
            <person name="Yoshikawa H.-F."/>
            <person name="Zumstein E."/>
            <person name="Yoshikawa H."/>
            <person name="Danchin A."/>
        </authorList>
    </citation>
    <scope>NUCLEOTIDE SEQUENCE [LARGE SCALE GENOMIC DNA]</scope>
    <source>
        <strain>168</strain>
    </source>
</reference>
<protein>
    <recommendedName>
        <fullName>Uncharacterized protein YfhL</fullName>
    </recommendedName>
</protein>
<feature type="chain" id="PRO_0000049523" description="Uncharacterized protein YfhL">
    <location>
        <begin position="1"/>
        <end position="110"/>
    </location>
</feature>
<feature type="transmembrane region" description="Helical" evidence="1">
    <location>
        <begin position="4"/>
        <end position="26"/>
    </location>
</feature>
<feature type="transmembrane region" description="Helical" evidence="1">
    <location>
        <begin position="46"/>
        <end position="68"/>
    </location>
</feature>
<feature type="transmembrane region" description="Helical" evidence="1">
    <location>
        <begin position="72"/>
        <end position="91"/>
    </location>
</feature>
<sequence>MTGLVGGGLMIIAGILIKLFPPKSINSVYGYRTRRSMSDQRLWNEANRYSASLMILSGLVIAGMGLLLGSNLFILQLILLIAACVITFMLTEKRLKIMTHSQGGDRSGRS</sequence>